<accession>A5F4P6</accession>
<accession>C3M1T5</accession>
<evidence type="ECO:0000255" key="1">
    <source>
        <dbReference type="HAMAP-Rule" id="MF_01531"/>
    </source>
</evidence>
<evidence type="ECO:0000255" key="2">
    <source>
        <dbReference type="PROSITE-ProRule" id="PRU01360"/>
    </source>
</evidence>
<feature type="signal peptide" evidence="1">
    <location>
        <begin position="1"/>
        <end position="22"/>
    </location>
</feature>
<feature type="chain" id="PRO_1000073547" description="Vitamin B12 transporter BtuB">
    <location>
        <begin position="23"/>
        <end position="611"/>
    </location>
</feature>
<feature type="domain" description="TBDR plug" evidence="2">
    <location>
        <begin position="41"/>
        <end position="154"/>
    </location>
</feature>
<feature type="domain" description="TBDR beta-barrel" evidence="2">
    <location>
        <begin position="159"/>
        <end position="611"/>
    </location>
</feature>
<feature type="short sequence motif" description="TonB box">
    <location>
        <begin position="29"/>
        <end position="36"/>
    </location>
</feature>
<feature type="short sequence motif" description="TonB C-terminal box">
    <location>
        <begin position="594"/>
        <end position="611"/>
    </location>
</feature>
<gene>
    <name evidence="1" type="primary">btuB</name>
    <name type="ordered locus">VC0395_A2342</name>
    <name type="ordered locus">VC395_0005</name>
</gene>
<proteinExistence type="inferred from homology"/>
<keyword id="KW-0998">Cell outer membrane</keyword>
<keyword id="KW-0406">Ion transport</keyword>
<keyword id="KW-0472">Membrane</keyword>
<keyword id="KW-0626">Porin</keyword>
<keyword id="KW-0732">Signal</keyword>
<keyword id="KW-0798">TonB box</keyword>
<keyword id="KW-0812">Transmembrane</keyword>
<keyword id="KW-1134">Transmembrane beta strand</keyword>
<keyword id="KW-0813">Transport</keyword>
<name>BTUB_VIBC3</name>
<dbReference type="EMBL" id="CP000627">
    <property type="protein sequence ID" value="ABQ21265.1"/>
    <property type="molecule type" value="Genomic_DNA"/>
</dbReference>
<dbReference type="EMBL" id="CP001235">
    <property type="protein sequence ID" value="ACP08034.1"/>
    <property type="molecule type" value="Genomic_DNA"/>
</dbReference>
<dbReference type="RefSeq" id="WP_001172310.1">
    <property type="nucleotide sequence ID" value="NZ_JAACZH010000037.1"/>
</dbReference>
<dbReference type="SMR" id="A5F4P6"/>
<dbReference type="KEGG" id="vco:VC0395_A2342"/>
<dbReference type="KEGG" id="vcr:VC395_0005"/>
<dbReference type="PATRIC" id="fig|345073.21.peg.4"/>
<dbReference type="eggNOG" id="COG4206">
    <property type="taxonomic scope" value="Bacteria"/>
</dbReference>
<dbReference type="HOGENOM" id="CLU_008287_18_5_6"/>
<dbReference type="OrthoDB" id="9764669at2"/>
<dbReference type="Proteomes" id="UP000000249">
    <property type="component" value="Chromosome 2"/>
</dbReference>
<dbReference type="GO" id="GO:0009279">
    <property type="term" value="C:cell outer membrane"/>
    <property type="evidence" value="ECO:0007669"/>
    <property type="project" value="UniProtKB-SubCell"/>
</dbReference>
<dbReference type="GO" id="GO:0046930">
    <property type="term" value="C:pore complex"/>
    <property type="evidence" value="ECO:0007669"/>
    <property type="project" value="UniProtKB-KW"/>
</dbReference>
<dbReference type="GO" id="GO:0015420">
    <property type="term" value="F:ABC-type vitamin B12 transporter activity"/>
    <property type="evidence" value="ECO:0007669"/>
    <property type="project" value="InterPro"/>
</dbReference>
<dbReference type="GO" id="GO:0015288">
    <property type="term" value="F:porin activity"/>
    <property type="evidence" value="ECO:0007669"/>
    <property type="project" value="UniProtKB-KW"/>
</dbReference>
<dbReference type="GO" id="GO:0006811">
    <property type="term" value="P:monoatomic ion transport"/>
    <property type="evidence" value="ECO:0007669"/>
    <property type="project" value="UniProtKB-KW"/>
</dbReference>
<dbReference type="CDD" id="cd01347">
    <property type="entry name" value="ligand_gated_channel"/>
    <property type="match status" value="1"/>
</dbReference>
<dbReference type="FunFam" id="2.170.130.10:FF:000002">
    <property type="entry name" value="Vitamin B12 transporter BtuB"/>
    <property type="match status" value="1"/>
</dbReference>
<dbReference type="Gene3D" id="2.40.170.20">
    <property type="entry name" value="TonB-dependent receptor, beta-barrel domain"/>
    <property type="match status" value="1"/>
</dbReference>
<dbReference type="Gene3D" id="2.170.130.10">
    <property type="entry name" value="TonB-dependent receptor, plug domain"/>
    <property type="match status" value="1"/>
</dbReference>
<dbReference type="HAMAP" id="MF_01531">
    <property type="entry name" value="BtuB"/>
    <property type="match status" value="1"/>
</dbReference>
<dbReference type="InterPro" id="IPR010101">
    <property type="entry name" value="B12_transptr_BtuB"/>
</dbReference>
<dbReference type="InterPro" id="IPR012910">
    <property type="entry name" value="Plug_dom"/>
</dbReference>
<dbReference type="InterPro" id="IPR037066">
    <property type="entry name" value="Plug_dom_sf"/>
</dbReference>
<dbReference type="InterPro" id="IPR039426">
    <property type="entry name" value="TonB-dep_rcpt-like"/>
</dbReference>
<dbReference type="InterPro" id="IPR000531">
    <property type="entry name" value="TonB-dep_rcpt_b-brl"/>
</dbReference>
<dbReference type="InterPro" id="IPR010916">
    <property type="entry name" value="TonB_box_CS"/>
</dbReference>
<dbReference type="InterPro" id="IPR036942">
    <property type="entry name" value="TonB_rcpt_b-brl_sf"/>
</dbReference>
<dbReference type="InterPro" id="IPR010917">
    <property type="entry name" value="TonB_rcpt_CS"/>
</dbReference>
<dbReference type="NCBIfam" id="TIGR01779">
    <property type="entry name" value="TonB-B12"/>
    <property type="match status" value="1"/>
</dbReference>
<dbReference type="PANTHER" id="PTHR30069:SF53">
    <property type="entry name" value="COLICIN I RECEPTOR-RELATED"/>
    <property type="match status" value="1"/>
</dbReference>
<dbReference type="PANTHER" id="PTHR30069">
    <property type="entry name" value="TONB-DEPENDENT OUTER MEMBRANE RECEPTOR"/>
    <property type="match status" value="1"/>
</dbReference>
<dbReference type="Pfam" id="PF07715">
    <property type="entry name" value="Plug"/>
    <property type="match status" value="1"/>
</dbReference>
<dbReference type="Pfam" id="PF00593">
    <property type="entry name" value="TonB_dep_Rec_b-barrel"/>
    <property type="match status" value="1"/>
</dbReference>
<dbReference type="SUPFAM" id="SSF56935">
    <property type="entry name" value="Porins"/>
    <property type="match status" value="1"/>
</dbReference>
<dbReference type="PROSITE" id="PS00430">
    <property type="entry name" value="TONB_DEPENDENT_REC_1"/>
    <property type="match status" value="1"/>
</dbReference>
<dbReference type="PROSITE" id="PS01156">
    <property type="entry name" value="TONB_DEPENDENT_REC_2"/>
    <property type="match status" value="1"/>
</dbReference>
<dbReference type="PROSITE" id="PS52016">
    <property type="entry name" value="TONB_DEPENDENT_REC_3"/>
    <property type="match status" value="1"/>
</dbReference>
<organism>
    <name type="scientific">Vibrio cholerae serotype O1 (strain ATCC 39541 / Classical Ogawa 395 / O395)</name>
    <dbReference type="NCBI Taxonomy" id="345073"/>
    <lineage>
        <taxon>Bacteria</taxon>
        <taxon>Pseudomonadati</taxon>
        <taxon>Pseudomonadota</taxon>
        <taxon>Gammaproteobacteria</taxon>
        <taxon>Vibrionales</taxon>
        <taxon>Vibrionaceae</taxon>
        <taxon>Vibrio</taxon>
    </lineage>
</organism>
<comment type="function">
    <text evidence="1">Involved in the active translocation of vitamin B12 (cyanocobalamin) across the outer membrane to the periplasmic space. It derives its energy for transport by interacting with the trans-periplasmic membrane protein TonB.</text>
</comment>
<comment type="subcellular location">
    <subcellularLocation>
        <location evidence="1">Cell outer membrane</location>
        <topology evidence="1">Multi-pass membrane protein</topology>
    </subcellularLocation>
</comment>
<comment type="similarity">
    <text evidence="1">Belongs to the TonB-dependent receptor family. BtuB (TC 1.B.14.3.1) subfamily.</text>
</comment>
<sequence>MQKSALAIALASLLTPISYLHANEAQPQETVVVTANRFEQKASSTLADVEIITRQDIEQTQAKTLPELLRRLTGVQITQNGGRGQLASLFVRGTSSDQVLVLVDGIRFARAAKGAVDFNQIPLTYVDRIEYVRGARASLYGSEAIGGVINIITKARSQQQGTTVSAGLGSLDYQELSIASGVAIGEKGQMNVALGTESDKGYNVRPVPGVNDGDRHGFRSDNALLGYVHQFDESWSLFANARAYENIYQYDNSYGTRDYKEAEKDDLSFTIGTQYQSERWVSELQLTTQKQKSWDYTQSKGKYSDTSDNLEQRNIQWINRYLVNDVWTFAGGVDWRDESYIDKTADKEFDRSNTAAFAVVAAEWQQWLLEASLRFDDNQEYGSQTTHNIALGYQFIPEFGVKASYGSAFKAPNLYQQYDPSYGNVNLQPEDADSAELSFYGLFSGIKWSITGYDYKINNLIDYNSTTKNYQNVIGESNIKGVEFTAEFATGIVQHQLSVDLKDADDSKGKTLQRRAEHMYKWNALVAFEQVDWSIGYQYVGKRPDLDYNTYPTQNITLDAYSLVDTSVSYYVTDSTTISARIDNLLDKEYETANGYPAAERAYYLNIGYQF</sequence>
<reference key="1">
    <citation type="submission" date="2007-03" db="EMBL/GenBank/DDBJ databases">
        <authorList>
            <person name="Heidelberg J."/>
        </authorList>
    </citation>
    <scope>NUCLEOTIDE SEQUENCE [LARGE SCALE GENOMIC DNA]</scope>
    <source>
        <strain>ATCC 39541 / Classical Ogawa 395 / O395</strain>
    </source>
</reference>
<reference key="2">
    <citation type="journal article" date="2008" name="PLoS ONE">
        <title>A recalibrated molecular clock and independent origins for the cholera pandemic clones.</title>
        <authorList>
            <person name="Feng L."/>
            <person name="Reeves P.R."/>
            <person name="Lan R."/>
            <person name="Ren Y."/>
            <person name="Gao C."/>
            <person name="Zhou Z."/>
            <person name="Ren Y."/>
            <person name="Cheng J."/>
            <person name="Wang W."/>
            <person name="Wang J."/>
            <person name="Qian W."/>
            <person name="Li D."/>
            <person name="Wang L."/>
        </authorList>
    </citation>
    <scope>NUCLEOTIDE SEQUENCE [LARGE SCALE GENOMIC DNA]</scope>
    <source>
        <strain>ATCC 39541 / Classical Ogawa 395 / O395</strain>
    </source>
</reference>
<protein>
    <recommendedName>
        <fullName evidence="1">Vitamin B12 transporter BtuB</fullName>
    </recommendedName>
    <alternativeName>
        <fullName evidence="1">Cobalamin receptor</fullName>
    </alternativeName>
    <alternativeName>
        <fullName evidence="1">Outer membrane cobalamin translocator</fullName>
    </alternativeName>
</protein>